<keyword id="KW-0963">Cytoplasm</keyword>
<keyword id="KW-0489">Methyltransferase</keyword>
<keyword id="KW-0949">S-adenosyl-L-methionine</keyword>
<keyword id="KW-0808">Transferase</keyword>
<proteinExistence type="inferred from homology"/>
<comment type="catalytic activity">
    <reaction evidence="1">
        <text>S-adenosyl-L-methionine + a thiopurine = S-adenosyl-L-homocysteine + a thiopurine S-methylether.</text>
        <dbReference type="EC" id="2.1.1.67"/>
    </reaction>
</comment>
<comment type="subcellular location">
    <subcellularLocation>
        <location evidence="1">Cytoplasm</location>
    </subcellularLocation>
</comment>
<comment type="similarity">
    <text evidence="1">Belongs to the class I-like SAM-binding methyltransferase superfamily. TPMT family.</text>
</comment>
<reference key="1">
    <citation type="journal article" date="2003" name="Genome Res.">
        <title>Comparative genome analysis of Vibrio vulnificus, a marine pathogen.</title>
        <authorList>
            <person name="Chen C.-Y."/>
            <person name="Wu K.-M."/>
            <person name="Chang Y.-C."/>
            <person name="Chang C.-H."/>
            <person name="Tsai H.-C."/>
            <person name="Liao T.-L."/>
            <person name="Liu Y.-M."/>
            <person name="Chen H.-J."/>
            <person name="Shen A.B.-T."/>
            <person name="Li J.-C."/>
            <person name="Su T.-L."/>
            <person name="Shao C.-P."/>
            <person name="Lee C.-T."/>
            <person name="Hor L.-I."/>
            <person name="Tsai S.-F."/>
        </authorList>
    </citation>
    <scope>NUCLEOTIDE SEQUENCE [LARGE SCALE GENOMIC DNA]</scope>
    <source>
        <strain>YJ016</strain>
    </source>
</reference>
<sequence length="217" mass="24868">MRDAEFWHNKWASNQIGFHLEDVNPLLTRFWSALAPKREETVLVPLCGKTEDLAWLATKHDHVEGAELSLIAVRSFFAEHFYTPTVTPISGQHELYQFDELSIYAGDFFTAPLSKADLIYDRAALIALPEEMRVEYVQRIRGLLNPGGRILLVSLDYPQQEMAGPPFSVTQEEIEHLFAGMHVTRLYQDIADEHHPKIAKQGLSRFSEEVYVIENDK</sequence>
<organism>
    <name type="scientific">Vibrio vulnificus (strain YJ016)</name>
    <dbReference type="NCBI Taxonomy" id="196600"/>
    <lineage>
        <taxon>Bacteria</taxon>
        <taxon>Pseudomonadati</taxon>
        <taxon>Pseudomonadota</taxon>
        <taxon>Gammaproteobacteria</taxon>
        <taxon>Vibrionales</taxon>
        <taxon>Vibrionaceae</taxon>
        <taxon>Vibrio</taxon>
    </lineage>
</organism>
<gene>
    <name evidence="1" type="primary">tpm</name>
    <name type="ordered locus">VV1964</name>
</gene>
<name>TPMT_VIBVY</name>
<accession>Q7MK46</accession>
<feature type="chain" id="PRO_0000220137" description="Thiopurine S-methyltransferase">
    <location>
        <begin position="1"/>
        <end position="217"/>
    </location>
</feature>
<feature type="binding site" evidence="1">
    <location>
        <position position="11"/>
    </location>
    <ligand>
        <name>S-adenosyl-L-methionine</name>
        <dbReference type="ChEBI" id="CHEBI:59789"/>
    </ligand>
</feature>
<feature type="binding site" evidence="1">
    <location>
        <position position="46"/>
    </location>
    <ligand>
        <name>S-adenosyl-L-methionine</name>
        <dbReference type="ChEBI" id="CHEBI:59789"/>
    </ligand>
</feature>
<feature type="binding site" evidence="1">
    <location>
        <position position="67"/>
    </location>
    <ligand>
        <name>S-adenosyl-L-methionine</name>
        <dbReference type="ChEBI" id="CHEBI:59789"/>
    </ligand>
</feature>
<feature type="binding site" evidence="1">
    <location>
        <position position="122"/>
    </location>
    <ligand>
        <name>S-adenosyl-L-methionine</name>
        <dbReference type="ChEBI" id="CHEBI:59789"/>
    </ligand>
</feature>
<protein>
    <recommendedName>
        <fullName evidence="1">Thiopurine S-methyltransferase</fullName>
        <ecNumber evidence="1">2.1.1.67</ecNumber>
    </recommendedName>
    <alternativeName>
        <fullName evidence="1">Thiopurine methyltransferase</fullName>
    </alternativeName>
</protein>
<dbReference type="EC" id="2.1.1.67" evidence="1"/>
<dbReference type="EMBL" id="BA000037">
    <property type="protein sequence ID" value="BAC94728.1"/>
    <property type="molecule type" value="Genomic_DNA"/>
</dbReference>
<dbReference type="RefSeq" id="WP_011080244.1">
    <property type="nucleotide sequence ID" value="NC_005139.1"/>
</dbReference>
<dbReference type="SMR" id="Q7MK46"/>
<dbReference type="STRING" id="672.VV93_v1c17240"/>
<dbReference type="KEGG" id="vvy:VV1964"/>
<dbReference type="PATRIC" id="fig|196600.6.peg.1992"/>
<dbReference type="eggNOG" id="COG0500">
    <property type="taxonomic scope" value="Bacteria"/>
</dbReference>
<dbReference type="HOGENOM" id="CLU_085515_1_0_6"/>
<dbReference type="Proteomes" id="UP000002675">
    <property type="component" value="Chromosome I"/>
</dbReference>
<dbReference type="GO" id="GO:0005737">
    <property type="term" value="C:cytoplasm"/>
    <property type="evidence" value="ECO:0007669"/>
    <property type="project" value="UniProtKB-SubCell"/>
</dbReference>
<dbReference type="GO" id="GO:0008119">
    <property type="term" value="F:thiopurine S-methyltransferase activity"/>
    <property type="evidence" value="ECO:0007669"/>
    <property type="project" value="UniProtKB-UniRule"/>
</dbReference>
<dbReference type="GO" id="GO:0032259">
    <property type="term" value="P:methylation"/>
    <property type="evidence" value="ECO:0007669"/>
    <property type="project" value="UniProtKB-KW"/>
</dbReference>
<dbReference type="GO" id="GO:0010038">
    <property type="term" value="P:response to metal ion"/>
    <property type="evidence" value="ECO:0007669"/>
    <property type="project" value="InterPro"/>
</dbReference>
<dbReference type="FunFam" id="3.40.50.150:FF:000101">
    <property type="entry name" value="Thiopurine S-methyltransferase"/>
    <property type="match status" value="1"/>
</dbReference>
<dbReference type="Gene3D" id="3.40.50.150">
    <property type="entry name" value="Vaccinia Virus protein VP39"/>
    <property type="match status" value="1"/>
</dbReference>
<dbReference type="HAMAP" id="MF_00812">
    <property type="entry name" value="Thiopur_methtran"/>
    <property type="match status" value="1"/>
</dbReference>
<dbReference type="InterPro" id="IPR029063">
    <property type="entry name" value="SAM-dependent_MTases_sf"/>
</dbReference>
<dbReference type="InterPro" id="IPR022474">
    <property type="entry name" value="Thiopur_S-MeTfrase_Se/Te_detox"/>
</dbReference>
<dbReference type="InterPro" id="IPR025835">
    <property type="entry name" value="Thiopurine_S-MeTrfase"/>
</dbReference>
<dbReference type="InterPro" id="IPR008854">
    <property type="entry name" value="TPMT"/>
</dbReference>
<dbReference type="NCBIfam" id="NF009732">
    <property type="entry name" value="PRK13255.1"/>
    <property type="match status" value="1"/>
</dbReference>
<dbReference type="NCBIfam" id="TIGR03840">
    <property type="entry name" value="TMPT_Se_Te"/>
    <property type="match status" value="1"/>
</dbReference>
<dbReference type="PANTHER" id="PTHR10259">
    <property type="entry name" value="THIOPURINE S-METHYLTRANSFERASE"/>
    <property type="match status" value="1"/>
</dbReference>
<dbReference type="PANTHER" id="PTHR10259:SF11">
    <property type="entry name" value="THIOPURINE S-METHYLTRANSFERASE"/>
    <property type="match status" value="1"/>
</dbReference>
<dbReference type="Pfam" id="PF05724">
    <property type="entry name" value="TPMT"/>
    <property type="match status" value="1"/>
</dbReference>
<dbReference type="PIRSF" id="PIRSF023956">
    <property type="entry name" value="Thiopurine_S-methyltransferase"/>
    <property type="match status" value="1"/>
</dbReference>
<dbReference type="SUPFAM" id="SSF53335">
    <property type="entry name" value="S-adenosyl-L-methionine-dependent methyltransferases"/>
    <property type="match status" value="1"/>
</dbReference>
<dbReference type="PROSITE" id="PS51585">
    <property type="entry name" value="SAM_MT_TPMT"/>
    <property type="match status" value="1"/>
</dbReference>
<evidence type="ECO:0000255" key="1">
    <source>
        <dbReference type="HAMAP-Rule" id="MF_00812"/>
    </source>
</evidence>